<evidence type="ECO:0000255" key="1">
    <source>
        <dbReference type="HAMAP-Rule" id="MF_00199"/>
    </source>
</evidence>
<feature type="chain" id="PRO_1000012100" description="Bis(5'-nucleosyl)-tetraphosphatase, symmetrical">
    <location>
        <begin position="1"/>
        <end position="280"/>
    </location>
</feature>
<name>APAH_SHISS</name>
<comment type="function">
    <text evidence="1">Hydrolyzes diadenosine 5',5'''-P1,P4-tetraphosphate to yield ADP.</text>
</comment>
<comment type="catalytic activity">
    <reaction evidence="1">
        <text>P(1),P(4)-bis(5'-adenosyl) tetraphosphate + H2O = 2 ADP + 2 H(+)</text>
        <dbReference type="Rhea" id="RHEA:24252"/>
        <dbReference type="ChEBI" id="CHEBI:15377"/>
        <dbReference type="ChEBI" id="CHEBI:15378"/>
        <dbReference type="ChEBI" id="CHEBI:58141"/>
        <dbReference type="ChEBI" id="CHEBI:456216"/>
        <dbReference type="EC" id="3.6.1.41"/>
    </reaction>
</comment>
<comment type="similarity">
    <text evidence="1">Belongs to the Ap4A hydrolase family.</text>
</comment>
<gene>
    <name evidence="1" type="primary">apaH</name>
    <name type="ordered locus">SSON_0057</name>
</gene>
<organism>
    <name type="scientific">Shigella sonnei (strain Ss046)</name>
    <dbReference type="NCBI Taxonomy" id="300269"/>
    <lineage>
        <taxon>Bacteria</taxon>
        <taxon>Pseudomonadati</taxon>
        <taxon>Pseudomonadota</taxon>
        <taxon>Gammaproteobacteria</taxon>
        <taxon>Enterobacterales</taxon>
        <taxon>Enterobacteriaceae</taxon>
        <taxon>Shigella</taxon>
    </lineage>
</organism>
<proteinExistence type="inferred from homology"/>
<dbReference type="EC" id="3.6.1.41" evidence="1"/>
<dbReference type="EMBL" id="CP000038">
    <property type="protein sequence ID" value="AAZ86852.1"/>
    <property type="molecule type" value="Genomic_DNA"/>
</dbReference>
<dbReference type="RefSeq" id="WP_000257192.1">
    <property type="nucleotide sequence ID" value="NC_007384.1"/>
</dbReference>
<dbReference type="SMR" id="Q3Z5W0"/>
<dbReference type="GeneID" id="93777386"/>
<dbReference type="KEGG" id="ssn:SSON_0057"/>
<dbReference type="HOGENOM" id="CLU_056184_2_0_6"/>
<dbReference type="Proteomes" id="UP000002529">
    <property type="component" value="Chromosome"/>
</dbReference>
<dbReference type="GO" id="GO:0008803">
    <property type="term" value="F:bis(5'-nucleosyl)-tetraphosphatase (symmetrical) activity"/>
    <property type="evidence" value="ECO:0007669"/>
    <property type="project" value="UniProtKB-UniRule"/>
</dbReference>
<dbReference type="CDD" id="cd07422">
    <property type="entry name" value="MPP_ApaH"/>
    <property type="match status" value="1"/>
</dbReference>
<dbReference type="FunFam" id="3.60.21.10:FF:000013">
    <property type="entry name" value="Bis(5'-nucleosyl)-tetraphosphatase, symmetrical"/>
    <property type="match status" value="1"/>
</dbReference>
<dbReference type="Gene3D" id="3.60.21.10">
    <property type="match status" value="1"/>
</dbReference>
<dbReference type="HAMAP" id="MF_00199">
    <property type="entry name" value="ApaH"/>
    <property type="match status" value="1"/>
</dbReference>
<dbReference type="InterPro" id="IPR004617">
    <property type="entry name" value="ApaH"/>
</dbReference>
<dbReference type="InterPro" id="IPR004843">
    <property type="entry name" value="Calcineurin-like_PHP_ApaH"/>
</dbReference>
<dbReference type="InterPro" id="IPR029052">
    <property type="entry name" value="Metallo-depent_PP-like"/>
</dbReference>
<dbReference type="NCBIfam" id="TIGR00668">
    <property type="entry name" value="apaH"/>
    <property type="match status" value="1"/>
</dbReference>
<dbReference type="NCBIfam" id="NF001204">
    <property type="entry name" value="PRK00166.1"/>
    <property type="match status" value="1"/>
</dbReference>
<dbReference type="PANTHER" id="PTHR40942">
    <property type="match status" value="1"/>
</dbReference>
<dbReference type="PANTHER" id="PTHR40942:SF4">
    <property type="entry name" value="CYTOCHROME C5"/>
    <property type="match status" value="1"/>
</dbReference>
<dbReference type="Pfam" id="PF00149">
    <property type="entry name" value="Metallophos"/>
    <property type="match status" value="1"/>
</dbReference>
<dbReference type="PIRSF" id="PIRSF000903">
    <property type="entry name" value="B5n-ttraPtase_sm"/>
    <property type="match status" value="1"/>
</dbReference>
<dbReference type="SUPFAM" id="SSF56300">
    <property type="entry name" value="Metallo-dependent phosphatases"/>
    <property type="match status" value="1"/>
</dbReference>
<protein>
    <recommendedName>
        <fullName evidence="1">Bis(5'-nucleosyl)-tetraphosphatase, symmetrical</fullName>
        <ecNumber evidence="1">3.6.1.41</ecNumber>
    </recommendedName>
    <alternativeName>
        <fullName evidence="1">Ap4A hydrolase</fullName>
    </alternativeName>
    <alternativeName>
        <fullName evidence="1">Diadenosine 5',5'''-P1,P4-tetraphosphate pyrophosphohydrolase</fullName>
    </alternativeName>
    <alternativeName>
        <fullName evidence="1">Diadenosine tetraphosphatase</fullName>
    </alternativeName>
</protein>
<reference key="1">
    <citation type="journal article" date="2005" name="Nucleic Acids Res.">
        <title>Genome dynamics and diversity of Shigella species, the etiologic agents of bacillary dysentery.</title>
        <authorList>
            <person name="Yang F."/>
            <person name="Yang J."/>
            <person name="Zhang X."/>
            <person name="Chen L."/>
            <person name="Jiang Y."/>
            <person name="Yan Y."/>
            <person name="Tang X."/>
            <person name="Wang J."/>
            <person name="Xiong Z."/>
            <person name="Dong J."/>
            <person name="Xue Y."/>
            <person name="Zhu Y."/>
            <person name="Xu X."/>
            <person name="Sun L."/>
            <person name="Chen S."/>
            <person name="Nie H."/>
            <person name="Peng J."/>
            <person name="Xu J."/>
            <person name="Wang Y."/>
            <person name="Yuan Z."/>
            <person name="Wen Y."/>
            <person name="Yao Z."/>
            <person name="Shen Y."/>
            <person name="Qiang B."/>
            <person name="Hou Y."/>
            <person name="Yu J."/>
            <person name="Jin Q."/>
        </authorList>
    </citation>
    <scope>NUCLEOTIDE SEQUENCE [LARGE SCALE GENOMIC DNA]</scope>
    <source>
        <strain>Ss046</strain>
    </source>
</reference>
<accession>Q3Z5W0</accession>
<sequence length="280" mass="31297">MATYLIGDVHGCYDELIALLHKVEFTPGKDTLWLTGDLVARGPGSLDVLRYVKSLGDSVRLVLGNHDLHLLAVFAGISRNKPKDRLTPLLEAPDADELLNWLRRQPLLQIDEEKKLVMAHAGITPQWDLQTAKECARDVEAVLSSDSYPFFLDAMYGDMPNNWSPELRGLGRLRFITNAFTRMRFCFPNGQLDMYSKESPEEAPAPLKPWFAIPGPVAEEYSIAFGHWASLEGKGTPEGIYALDTGCCWGGTLTCLRWEDKQYFVQPSNRHKDLGEAAAS</sequence>
<keyword id="KW-0378">Hydrolase</keyword>
<keyword id="KW-1185">Reference proteome</keyword>